<proteinExistence type="inferred from homology"/>
<protein>
    <recommendedName>
        <fullName evidence="1">tRNA-2-methylthio-N(6)-dimethylallyladenosine synthase</fullName>
        <ecNumber evidence="1">2.8.4.3</ecNumber>
    </recommendedName>
    <alternativeName>
        <fullName evidence="1">(Dimethylallyl)adenosine tRNA methylthiotransferase MiaB</fullName>
    </alternativeName>
    <alternativeName>
        <fullName evidence="1">tRNA-i(6)A37 methylthiotransferase</fullName>
    </alternativeName>
</protein>
<comment type="function">
    <text evidence="1">Catalyzes the methylthiolation of N6-(dimethylallyl)adenosine (i(6)A), leading to the formation of 2-methylthio-N6-(dimethylallyl)adenosine (ms(2)i(6)A) at position 37 in tRNAs that read codons beginning with uridine.</text>
</comment>
<comment type="catalytic activity">
    <reaction evidence="1">
        <text>N(6)-dimethylallyladenosine(37) in tRNA + (sulfur carrier)-SH + AH2 + 2 S-adenosyl-L-methionine = 2-methylsulfanyl-N(6)-dimethylallyladenosine(37) in tRNA + (sulfur carrier)-H + 5'-deoxyadenosine + L-methionine + A + S-adenosyl-L-homocysteine + 2 H(+)</text>
        <dbReference type="Rhea" id="RHEA:37067"/>
        <dbReference type="Rhea" id="RHEA-COMP:10375"/>
        <dbReference type="Rhea" id="RHEA-COMP:10376"/>
        <dbReference type="Rhea" id="RHEA-COMP:14737"/>
        <dbReference type="Rhea" id="RHEA-COMP:14739"/>
        <dbReference type="ChEBI" id="CHEBI:13193"/>
        <dbReference type="ChEBI" id="CHEBI:15378"/>
        <dbReference type="ChEBI" id="CHEBI:17319"/>
        <dbReference type="ChEBI" id="CHEBI:17499"/>
        <dbReference type="ChEBI" id="CHEBI:29917"/>
        <dbReference type="ChEBI" id="CHEBI:57844"/>
        <dbReference type="ChEBI" id="CHEBI:57856"/>
        <dbReference type="ChEBI" id="CHEBI:59789"/>
        <dbReference type="ChEBI" id="CHEBI:64428"/>
        <dbReference type="ChEBI" id="CHEBI:74415"/>
        <dbReference type="ChEBI" id="CHEBI:74417"/>
        <dbReference type="EC" id="2.8.4.3"/>
    </reaction>
</comment>
<comment type="cofactor">
    <cofactor evidence="1">
        <name>[4Fe-4S] cluster</name>
        <dbReference type="ChEBI" id="CHEBI:49883"/>
    </cofactor>
    <text evidence="1">Binds 2 [4Fe-4S] clusters. One cluster is coordinated with 3 cysteines and an exchangeable S-adenosyl-L-methionine.</text>
</comment>
<comment type="subunit">
    <text evidence="1">Monomer.</text>
</comment>
<comment type="subcellular location">
    <subcellularLocation>
        <location evidence="1">Cytoplasm</location>
    </subcellularLocation>
</comment>
<comment type="similarity">
    <text evidence="1">Belongs to the methylthiotransferase family. MiaB subfamily.</text>
</comment>
<feature type="chain" id="PRO_0000374288" description="tRNA-2-methylthio-N(6)-dimethylallyladenosine synthase">
    <location>
        <begin position="1"/>
        <end position="474"/>
    </location>
</feature>
<feature type="domain" description="MTTase N-terminal" evidence="1">
    <location>
        <begin position="3"/>
        <end position="120"/>
    </location>
</feature>
<feature type="domain" description="Radical SAM core" evidence="2">
    <location>
        <begin position="143"/>
        <end position="375"/>
    </location>
</feature>
<feature type="domain" description="TRAM" evidence="1">
    <location>
        <begin position="378"/>
        <end position="441"/>
    </location>
</feature>
<feature type="binding site" evidence="1">
    <location>
        <position position="12"/>
    </location>
    <ligand>
        <name>[4Fe-4S] cluster</name>
        <dbReference type="ChEBI" id="CHEBI:49883"/>
        <label>1</label>
    </ligand>
</feature>
<feature type="binding site" evidence="1">
    <location>
        <position position="49"/>
    </location>
    <ligand>
        <name>[4Fe-4S] cluster</name>
        <dbReference type="ChEBI" id="CHEBI:49883"/>
        <label>1</label>
    </ligand>
</feature>
<feature type="binding site" evidence="1">
    <location>
        <position position="83"/>
    </location>
    <ligand>
        <name>[4Fe-4S] cluster</name>
        <dbReference type="ChEBI" id="CHEBI:49883"/>
        <label>1</label>
    </ligand>
</feature>
<feature type="binding site" evidence="1">
    <location>
        <position position="157"/>
    </location>
    <ligand>
        <name>[4Fe-4S] cluster</name>
        <dbReference type="ChEBI" id="CHEBI:49883"/>
        <label>2</label>
        <note>4Fe-4S-S-AdoMet</note>
    </ligand>
</feature>
<feature type="binding site" evidence="1">
    <location>
        <position position="161"/>
    </location>
    <ligand>
        <name>[4Fe-4S] cluster</name>
        <dbReference type="ChEBI" id="CHEBI:49883"/>
        <label>2</label>
        <note>4Fe-4S-S-AdoMet</note>
    </ligand>
</feature>
<feature type="binding site" evidence="1">
    <location>
        <position position="164"/>
    </location>
    <ligand>
        <name>[4Fe-4S] cluster</name>
        <dbReference type="ChEBI" id="CHEBI:49883"/>
        <label>2</label>
        <note>4Fe-4S-S-AdoMet</note>
    </ligand>
</feature>
<evidence type="ECO:0000255" key="1">
    <source>
        <dbReference type="HAMAP-Rule" id="MF_01864"/>
    </source>
</evidence>
<evidence type="ECO:0000255" key="2">
    <source>
        <dbReference type="PROSITE-ProRule" id="PRU01266"/>
    </source>
</evidence>
<sequence length="474" mass="53663">MTKKLHIKTWGCQMNEYDSSKMADLLDATHGYQLTDVAEEADVLLLNTCSIREKAQEKVFHQLGRWKLLKEKNPDLIIGVGGCVASQEGEHIRQRAHYVDIIFGPQTLHRLPEMINSVRGDRSPVVDISFPEIEKFDRLPEPRAEGPTAFVSIMEGCNKYCTYCVVPYTRGEEVSRPSDDILFEIAQLAAQGVREVNLLGQNVNAWRGENYDGTTGSFADLLRLVAAIDGIDRIRFTTSHPIEFTDDIIEVYRDTPELVSFLHLPVQSGSDRILNLMGRTHTALEYKAIIRKLRAARPDIQISSDFIVGFPGETTEDFEKTMKLIADVNFDMSYSFIFSARPGTPAADMVDDVPEEEKKQRLYILQERINQQAMAWSRRMLGTTQRILVEGTSRKSIMELSGRTENNRVVNFEGTPDMIGKFVDVEITDVYPNSLRGKVVRTEDEMGLRVAETPESVIARTRKENDLGVGYYQP</sequence>
<name>MIAB_ECO5E</name>
<keyword id="KW-0004">4Fe-4S</keyword>
<keyword id="KW-0963">Cytoplasm</keyword>
<keyword id="KW-0408">Iron</keyword>
<keyword id="KW-0411">Iron-sulfur</keyword>
<keyword id="KW-0479">Metal-binding</keyword>
<keyword id="KW-0949">S-adenosyl-L-methionine</keyword>
<keyword id="KW-0808">Transferase</keyword>
<keyword id="KW-0819">tRNA processing</keyword>
<accession>B5YQL3</accession>
<dbReference type="EC" id="2.8.4.3" evidence="1"/>
<dbReference type="EMBL" id="CP001164">
    <property type="protein sequence ID" value="ACI34585.1"/>
    <property type="molecule type" value="Genomic_DNA"/>
</dbReference>
<dbReference type="RefSeq" id="WP_000162740.1">
    <property type="nucleotide sequence ID" value="NC_011353.1"/>
</dbReference>
<dbReference type="SMR" id="B5YQL3"/>
<dbReference type="GeneID" id="86863171"/>
<dbReference type="KEGG" id="ecf:ECH74115_0755"/>
<dbReference type="HOGENOM" id="CLU_018697_2_0_6"/>
<dbReference type="GO" id="GO:0005829">
    <property type="term" value="C:cytosol"/>
    <property type="evidence" value="ECO:0007669"/>
    <property type="project" value="TreeGrafter"/>
</dbReference>
<dbReference type="GO" id="GO:0051539">
    <property type="term" value="F:4 iron, 4 sulfur cluster binding"/>
    <property type="evidence" value="ECO:0007669"/>
    <property type="project" value="UniProtKB-UniRule"/>
</dbReference>
<dbReference type="GO" id="GO:0046872">
    <property type="term" value="F:metal ion binding"/>
    <property type="evidence" value="ECO:0007669"/>
    <property type="project" value="UniProtKB-KW"/>
</dbReference>
<dbReference type="GO" id="GO:0035597">
    <property type="term" value="F:N6-isopentenyladenosine methylthiotransferase activity"/>
    <property type="evidence" value="ECO:0007669"/>
    <property type="project" value="TreeGrafter"/>
</dbReference>
<dbReference type="CDD" id="cd01335">
    <property type="entry name" value="Radical_SAM"/>
    <property type="match status" value="1"/>
</dbReference>
<dbReference type="FunFam" id="3.40.50.12160:FF:000001">
    <property type="entry name" value="tRNA-2-methylthio-N(6)-dimethylallyladenosine synthase"/>
    <property type="match status" value="1"/>
</dbReference>
<dbReference type="FunFam" id="3.80.30.20:FF:000001">
    <property type="entry name" value="tRNA-2-methylthio-N(6)-dimethylallyladenosine synthase 2"/>
    <property type="match status" value="1"/>
</dbReference>
<dbReference type="Gene3D" id="3.40.50.12160">
    <property type="entry name" value="Methylthiotransferase, N-terminal domain"/>
    <property type="match status" value="1"/>
</dbReference>
<dbReference type="Gene3D" id="3.80.30.20">
    <property type="entry name" value="tm_1862 like domain"/>
    <property type="match status" value="1"/>
</dbReference>
<dbReference type="HAMAP" id="MF_01864">
    <property type="entry name" value="tRNA_metthiotr_MiaB"/>
    <property type="match status" value="1"/>
</dbReference>
<dbReference type="InterPro" id="IPR006638">
    <property type="entry name" value="Elp3/MiaA/NifB-like_rSAM"/>
</dbReference>
<dbReference type="InterPro" id="IPR005839">
    <property type="entry name" value="Methylthiotransferase"/>
</dbReference>
<dbReference type="InterPro" id="IPR020612">
    <property type="entry name" value="Methylthiotransferase_CS"/>
</dbReference>
<dbReference type="InterPro" id="IPR013848">
    <property type="entry name" value="Methylthiotransferase_N"/>
</dbReference>
<dbReference type="InterPro" id="IPR038135">
    <property type="entry name" value="Methylthiotransferase_N_sf"/>
</dbReference>
<dbReference type="InterPro" id="IPR006463">
    <property type="entry name" value="MiaB_methiolase"/>
</dbReference>
<dbReference type="InterPro" id="IPR007197">
    <property type="entry name" value="rSAM"/>
</dbReference>
<dbReference type="InterPro" id="IPR023404">
    <property type="entry name" value="rSAM_horseshoe"/>
</dbReference>
<dbReference type="InterPro" id="IPR002792">
    <property type="entry name" value="TRAM_dom"/>
</dbReference>
<dbReference type="NCBIfam" id="TIGR01574">
    <property type="entry name" value="miaB-methiolase"/>
    <property type="match status" value="1"/>
</dbReference>
<dbReference type="NCBIfam" id="TIGR00089">
    <property type="entry name" value="MiaB/RimO family radical SAM methylthiotransferase"/>
    <property type="match status" value="1"/>
</dbReference>
<dbReference type="PANTHER" id="PTHR43020">
    <property type="entry name" value="CDK5 REGULATORY SUBUNIT-ASSOCIATED PROTEIN 1"/>
    <property type="match status" value="1"/>
</dbReference>
<dbReference type="PANTHER" id="PTHR43020:SF2">
    <property type="entry name" value="MITOCHONDRIAL TRNA METHYLTHIOTRANSFERASE CDK5RAP1"/>
    <property type="match status" value="1"/>
</dbReference>
<dbReference type="Pfam" id="PF04055">
    <property type="entry name" value="Radical_SAM"/>
    <property type="match status" value="1"/>
</dbReference>
<dbReference type="Pfam" id="PF01938">
    <property type="entry name" value="TRAM"/>
    <property type="match status" value="1"/>
</dbReference>
<dbReference type="Pfam" id="PF00919">
    <property type="entry name" value="UPF0004"/>
    <property type="match status" value="1"/>
</dbReference>
<dbReference type="SFLD" id="SFLDF00273">
    <property type="entry name" value="(dimethylallyl)adenosine_tRNA"/>
    <property type="match status" value="1"/>
</dbReference>
<dbReference type="SFLD" id="SFLDG01082">
    <property type="entry name" value="B12-binding_domain_containing"/>
    <property type="match status" value="1"/>
</dbReference>
<dbReference type="SFLD" id="SFLDS00029">
    <property type="entry name" value="Radical_SAM"/>
    <property type="match status" value="1"/>
</dbReference>
<dbReference type="SMART" id="SM00729">
    <property type="entry name" value="Elp3"/>
    <property type="match status" value="1"/>
</dbReference>
<dbReference type="SUPFAM" id="SSF102114">
    <property type="entry name" value="Radical SAM enzymes"/>
    <property type="match status" value="1"/>
</dbReference>
<dbReference type="PROSITE" id="PS51449">
    <property type="entry name" value="MTTASE_N"/>
    <property type="match status" value="1"/>
</dbReference>
<dbReference type="PROSITE" id="PS01278">
    <property type="entry name" value="MTTASE_RADICAL"/>
    <property type="match status" value="1"/>
</dbReference>
<dbReference type="PROSITE" id="PS51918">
    <property type="entry name" value="RADICAL_SAM"/>
    <property type="match status" value="1"/>
</dbReference>
<dbReference type="PROSITE" id="PS50926">
    <property type="entry name" value="TRAM"/>
    <property type="match status" value="1"/>
</dbReference>
<reference key="1">
    <citation type="journal article" date="2011" name="Proc. Natl. Acad. Sci. U.S.A.">
        <title>Genomic anatomy of Escherichia coli O157:H7 outbreaks.</title>
        <authorList>
            <person name="Eppinger M."/>
            <person name="Mammel M.K."/>
            <person name="Leclerc J.E."/>
            <person name="Ravel J."/>
            <person name="Cebula T.A."/>
        </authorList>
    </citation>
    <scope>NUCLEOTIDE SEQUENCE [LARGE SCALE GENOMIC DNA]</scope>
    <source>
        <strain>EC4115 / EHEC</strain>
    </source>
</reference>
<gene>
    <name evidence="1" type="primary">miaB</name>
    <name type="ordered locus">ECH74115_0755</name>
</gene>
<organism>
    <name type="scientific">Escherichia coli O157:H7 (strain EC4115 / EHEC)</name>
    <dbReference type="NCBI Taxonomy" id="444450"/>
    <lineage>
        <taxon>Bacteria</taxon>
        <taxon>Pseudomonadati</taxon>
        <taxon>Pseudomonadota</taxon>
        <taxon>Gammaproteobacteria</taxon>
        <taxon>Enterobacterales</taxon>
        <taxon>Enterobacteriaceae</taxon>
        <taxon>Escherichia</taxon>
    </lineage>
</organism>